<proteinExistence type="inferred from homology"/>
<reference key="1">
    <citation type="journal article" date="2015" name="Genome Announc.">
        <title>Complete Genome Sequence of Methanosphaerula palustris E1-9CT, a Hydrogenotrophic Methanogen Isolated from a Minerotrophic Fen Peatland.</title>
        <authorList>
            <person name="Cadillo-Quiroz H."/>
            <person name="Browne P."/>
            <person name="Kyrpides N."/>
            <person name="Woyke T."/>
            <person name="Goodwin L."/>
            <person name="Detter C."/>
            <person name="Yavitt J.B."/>
            <person name="Zinder S.H."/>
        </authorList>
    </citation>
    <scope>NUCLEOTIDE SEQUENCE [LARGE SCALE GENOMIC DNA]</scope>
    <source>
        <strain>ATCC BAA-1556 / DSM 19958 / E1-9c</strain>
    </source>
</reference>
<keyword id="KW-1185">Reference proteome</keyword>
<keyword id="KW-0687">Ribonucleoprotein</keyword>
<keyword id="KW-0689">Ribosomal protein</keyword>
<keyword id="KW-0694">RNA-binding</keyword>
<keyword id="KW-0699">rRNA-binding</keyword>
<dbReference type="EMBL" id="CP001338">
    <property type="protein sequence ID" value="ACL15555.1"/>
    <property type="molecule type" value="Genomic_DNA"/>
</dbReference>
<dbReference type="RefSeq" id="WP_012616874.1">
    <property type="nucleotide sequence ID" value="NC_011832.1"/>
</dbReference>
<dbReference type="SMR" id="B8GIY2"/>
<dbReference type="STRING" id="521011.Mpal_0162"/>
<dbReference type="GeneID" id="7270933"/>
<dbReference type="KEGG" id="mpl:Mpal_0162"/>
<dbReference type="eggNOG" id="arCOG04372">
    <property type="taxonomic scope" value="Archaea"/>
</dbReference>
<dbReference type="HOGENOM" id="CLU_074237_4_0_2"/>
<dbReference type="OrthoDB" id="8842at2157"/>
<dbReference type="Proteomes" id="UP000002457">
    <property type="component" value="Chromosome"/>
</dbReference>
<dbReference type="GO" id="GO:0015934">
    <property type="term" value="C:large ribosomal subunit"/>
    <property type="evidence" value="ECO:0007669"/>
    <property type="project" value="TreeGrafter"/>
</dbReference>
<dbReference type="GO" id="GO:0070180">
    <property type="term" value="F:large ribosomal subunit rRNA binding"/>
    <property type="evidence" value="ECO:0007669"/>
    <property type="project" value="UniProtKB-UniRule"/>
</dbReference>
<dbReference type="GO" id="GO:0003735">
    <property type="term" value="F:structural constituent of ribosome"/>
    <property type="evidence" value="ECO:0007669"/>
    <property type="project" value="InterPro"/>
</dbReference>
<dbReference type="GO" id="GO:0006412">
    <property type="term" value="P:translation"/>
    <property type="evidence" value="ECO:0007669"/>
    <property type="project" value="UniProtKB-UniRule"/>
</dbReference>
<dbReference type="CDD" id="cd00349">
    <property type="entry name" value="Ribosomal_L11"/>
    <property type="match status" value="1"/>
</dbReference>
<dbReference type="FunFam" id="3.30.1550.10:FF:000007">
    <property type="entry name" value="50S ribosomal protein L11"/>
    <property type="match status" value="1"/>
</dbReference>
<dbReference type="Gene3D" id="1.10.10.250">
    <property type="entry name" value="Ribosomal protein L11, C-terminal domain"/>
    <property type="match status" value="1"/>
</dbReference>
<dbReference type="Gene3D" id="3.30.1550.10">
    <property type="entry name" value="Ribosomal protein L11/L12, N-terminal domain"/>
    <property type="match status" value="1"/>
</dbReference>
<dbReference type="HAMAP" id="MF_00736">
    <property type="entry name" value="Ribosomal_uL11"/>
    <property type="match status" value="1"/>
</dbReference>
<dbReference type="InterPro" id="IPR000911">
    <property type="entry name" value="Ribosomal_uL11"/>
</dbReference>
<dbReference type="InterPro" id="IPR020783">
    <property type="entry name" value="Ribosomal_uL11_C"/>
</dbReference>
<dbReference type="InterPro" id="IPR036769">
    <property type="entry name" value="Ribosomal_uL11_C_sf"/>
</dbReference>
<dbReference type="InterPro" id="IPR020785">
    <property type="entry name" value="Ribosomal_uL11_CS"/>
</dbReference>
<dbReference type="InterPro" id="IPR020784">
    <property type="entry name" value="Ribosomal_uL11_N"/>
</dbReference>
<dbReference type="InterPro" id="IPR036796">
    <property type="entry name" value="Ribosomal_uL11_N_sf"/>
</dbReference>
<dbReference type="NCBIfam" id="NF002232">
    <property type="entry name" value="PRK01143.1"/>
    <property type="match status" value="1"/>
</dbReference>
<dbReference type="PANTHER" id="PTHR11661">
    <property type="entry name" value="60S RIBOSOMAL PROTEIN L12"/>
    <property type="match status" value="1"/>
</dbReference>
<dbReference type="PANTHER" id="PTHR11661:SF1">
    <property type="entry name" value="LARGE RIBOSOMAL SUBUNIT PROTEIN UL11M"/>
    <property type="match status" value="1"/>
</dbReference>
<dbReference type="Pfam" id="PF00298">
    <property type="entry name" value="Ribosomal_L11"/>
    <property type="match status" value="1"/>
</dbReference>
<dbReference type="Pfam" id="PF03946">
    <property type="entry name" value="Ribosomal_L11_N"/>
    <property type="match status" value="1"/>
</dbReference>
<dbReference type="SMART" id="SM00649">
    <property type="entry name" value="RL11"/>
    <property type="match status" value="1"/>
</dbReference>
<dbReference type="SUPFAM" id="SSF54747">
    <property type="entry name" value="Ribosomal L11/L12e N-terminal domain"/>
    <property type="match status" value="1"/>
</dbReference>
<dbReference type="SUPFAM" id="SSF46906">
    <property type="entry name" value="Ribosomal protein L11, C-terminal domain"/>
    <property type="match status" value="1"/>
</dbReference>
<dbReference type="PROSITE" id="PS00359">
    <property type="entry name" value="RIBOSOMAL_L11"/>
    <property type="match status" value="1"/>
</dbReference>
<comment type="function">
    <text evidence="1">Forms part of the ribosomal stalk which helps the ribosome interact with GTP-bound translation factors.</text>
</comment>
<comment type="subunit">
    <text evidence="1">Part of the ribosomal stalk of the 50S ribosomal subunit. Interacts with L10 and the large rRNA to form the base of the stalk. L10 forms an elongated spine to which L12 dimers bind in a sequential fashion forming a multimeric L10(L12)X complex.</text>
</comment>
<comment type="similarity">
    <text evidence="1">Belongs to the universal ribosomal protein uL11 family.</text>
</comment>
<name>RL11_METPE</name>
<gene>
    <name evidence="1" type="primary">rpl11</name>
    <name type="ordered locus">Mpal_0162</name>
</gene>
<feature type="chain" id="PRO_1000195757" description="Large ribosomal subunit protein uL11">
    <location>
        <begin position="1"/>
        <end position="158"/>
    </location>
</feature>
<sequence>MAETVEVLVPGGRATAGPPIGPALGPLGINVKAVVDDINKKTAEFNGMQVPVKIEVDDKKNVTISVGIPPTTALVMKEVGIEKGSAEPNSIIVGDLPIEAAVRIARMKLDDMLSYELKTAVKEVIGTCVSVGVTVDGKKPKEILAAISAGQYDSVLEA</sequence>
<organism>
    <name type="scientific">Methanosphaerula palustris (strain ATCC BAA-1556 / DSM 19958 / E1-9c)</name>
    <dbReference type="NCBI Taxonomy" id="521011"/>
    <lineage>
        <taxon>Archaea</taxon>
        <taxon>Methanobacteriati</taxon>
        <taxon>Methanobacteriota</taxon>
        <taxon>Stenosarchaea group</taxon>
        <taxon>Methanomicrobia</taxon>
        <taxon>Methanomicrobiales</taxon>
        <taxon>Methanoregulaceae</taxon>
        <taxon>Methanosphaerula</taxon>
    </lineage>
</organism>
<evidence type="ECO:0000255" key="1">
    <source>
        <dbReference type="HAMAP-Rule" id="MF_00736"/>
    </source>
</evidence>
<evidence type="ECO:0000305" key="2"/>
<accession>B8GIY2</accession>
<protein>
    <recommendedName>
        <fullName evidence="1">Large ribosomal subunit protein uL11</fullName>
    </recommendedName>
    <alternativeName>
        <fullName evidence="2">50S ribosomal protein L11</fullName>
    </alternativeName>
</protein>